<sequence length="243" mass="27529">MRPSTRFLRSVTRTVPIGFRSTTVPFVSSTLRSSAATSNQFSARFSGVRFYADEAKKEEPKDENDAAAAEEDANLTEEQKKIKDLETKLDAKTKEASEFKDRLLRSVADFRNLQEVTKKDIQKAKDFALQKFAKDLLESVDNFGHALNAFKPETLEQSQELSDLYTGVKMTRDVFEKTLKKHGIEQLNPIGESFDPNKHEATFELPQPDKEPGTVFHVQQIGYTLNDRVIRPAKVGIVKDNEN</sequence>
<comment type="function">
    <text evidence="1">Essential component of the PAM complex, a complex required for the translocation of transit peptide-containing proteins from the inner membrane into the mitochondrial matrix in an ATP-dependent manner. Seems to control the nucleotide-dependent binding of SSC1 to substrate proteins (By similarity).</text>
</comment>
<comment type="subunit">
    <text evidence="1">Component of the PAM complex, at least composed of mtHsp70, MGE1, TIM44, PAM16, PAM17 and PAM18.</text>
</comment>
<comment type="subcellular location">
    <subcellularLocation>
        <location evidence="1">Mitochondrion matrix</location>
    </subcellularLocation>
</comment>
<comment type="similarity">
    <text evidence="4">Belongs to the GrpE family.</text>
</comment>
<keyword id="KW-0143">Chaperone</keyword>
<keyword id="KW-0496">Mitochondrion</keyword>
<keyword id="KW-1185">Reference proteome</keyword>
<keyword id="KW-0809">Transit peptide</keyword>
<name>GRPE_KLULA</name>
<gene>
    <name type="primary">mge1</name>
    <name type="ordered locus">KLLA0D07326g</name>
</gene>
<protein>
    <recommendedName>
        <fullName>GrpE protein homolog, mitochondrial</fullName>
    </recommendedName>
</protein>
<accession>Q6CRQ1</accession>
<evidence type="ECO:0000250" key="1"/>
<evidence type="ECO:0000255" key="2"/>
<evidence type="ECO:0000256" key="3">
    <source>
        <dbReference type="SAM" id="MobiDB-lite"/>
    </source>
</evidence>
<evidence type="ECO:0000305" key="4"/>
<proteinExistence type="inferred from homology"/>
<reference key="1">
    <citation type="journal article" date="2004" name="Nature">
        <title>Genome evolution in yeasts.</title>
        <authorList>
            <person name="Dujon B."/>
            <person name="Sherman D."/>
            <person name="Fischer G."/>
            <person name="Durrens P."/>
            <person name="Casaregola S."/>
            <person name="Lafontaine I."/>
            <person name="de Montigny J."/>
            <person name="Marck C."/>
            <person name="Neuveglise C."/>
            <person name="Talla E."/>
            <person name="Goffard N."/>
            <person name="Frangeul L."/>
            <person name="Aigle M."/>
            <person name="Anthouard V."/>
            <person name="Babour A."/>
            <person name="Barbe V."/>
            <person name="Barnay S."/>
            <person name="Blanchin S."/>
            <person name="Beckerich J.-M."/>
            <person name="Beyne E."/>
            <person name="Bleykasten C."/>
            <person name="Boisrame A."/>
            <person name="Boyer J."/>
            <person name="Cattolico L."/>
            <person name="Confanioleri F."/>
            <person name="de Daruvar A."/>
            <person name="Despons L."/>
            <person name="Fabre E."/>
            <person name="Fairhead C."/>
            <person name="Ferry-Dumazet H."/>
            <person name="Groppi A."/>
            <person name="Hantraye F."/>
            <person name="Hennequin C."/>
            <person name="Jauniaux N."/>
            <person name="Joyet P."/>
            <person name="Kachouri R."/>
            <person name="Kerrest A."/>
            <person name="Koszul R."/>
            <person name="Lemaire M."/>
            <person name="Lesur I."/>
            <person name="Ma L."/>
            <person name="Muller H."/>
            <person name="Nicaud J.-M."/>
            <person name="Nikolski M."/>
            <person name="Oztas S."/>
            <person name="Ozier-Kalogeropoulos O."/>
            <person name="Pellenz S."/>
            <person name="Potier S."/>
            <person name="Richard G.-F."/>
            <person name="Straub M.-L."/>
            <person name="Suleau A."/>
            <person name="Swennen D."/>
            <person name="Tekaia F."/>
            <person name="Wesolowski-Louvel M."/>
            <person name="Westhof E."/>
            <person name="Wirth B."/>
            <person name="Zeniou-Meyer M."/>
            <person name="Zivanovic Y."/>
            <person name="Bolotin-Fukuhara M."/>
            <person name="Thierry A."/>
            <person name="Bouchier C."/>
            <person name="Caudron B."/>
            <person name="Scarpelli C."/>
            <person name="Gaillardin C."/>
            <person name="Weissenbach J."/>
            <person name="Wincker P."/>
            <person name="Souciet J.-L."/>
        </authorList>
    </citation>
    <scope>NUCLEOTIDE SEQUENCE [LARGE SCALE GENOMIC DNA]</scope>
    <source>
        <strain>ATCC 8585 / CBS 2359 / DSM 70799 / NBRC 1267 / NRRL Y-1140 / WM37</strain>
    </source>
</reference>
<organism>
    <name type="scientific">Kluyveromyces lactis (strain ATCC 8585 / CBS 2359 / DSM 70799 / NBRC 1267 / NRRL Y-1140 / WM37)</name>
    <name type="common">Yeast</name>
    <name type="synonym">Candida sphaerica</name>
    <dbReference type="NCBI Taxonomy" id="284590"/>
    <lineage>
        <taxon>Eukaryota</taxon>
        <taxon>Fungi</taxon>
        <taxon>Dikarya</taxon>
        <taxon>Ascomycota</taxon>
        <taxon>Saccharomycotina</taxon>
        <taxon>Saccharomycetes</taxon>
        <taxon>Saccharomycetales</taxon>
        <taxon>Saccharomycetaceae</taxon>
        <taxon>Kluyveromyces</taxon>
    </lineage>
</organism>
<dbReference type="EMBL" id="CR382124">
    <property type="protein sequence ID" value="CAH00484.1"/>
    <property type="molecule type" value="Genomic_DNA"/>
</dbReference>
<dbReference type="RefSeq" id="XP_453388.1">
    <property type="nucleotide sequence ID" value="XM_453388.1"/>
</dbReference>
<dbReference type="SMR" id="Q6CRQ1"/>
<dbReference type="FunCoup" id="Q6CRQ1">
    <property type="interactions" value="911"/>
</dbReference>
<dbReference type="STRING" id="284590.Q6CRQ1"/>
<dbReference type="PaxDb" id="284590-Q6CRQ1"/>
<dbReference type="KEGG" id="kla:KLLA0_D07326g"/>
<dbReference type="eggNOG" id="KOG3003">
    <property type="taxonomic scope" value="Eukaryota"/>
</dbReference>
<dbReference type="HOGENOM" id="CLU_057217_0_0_1"/>
<dbReference type="InParanoid" id="Q6CRQ1"/>
<dbReference type="OMA" id="PHRHQAI"/>
<dbReference type="Proteomes" id="UP000000598">
    <property type="component" value="Chromosome D"/>
</dbReference>
<dbReference type="GO" id="GO:0001405">
    <property type="term" value="C:PAM complex, Tim23 associated import motor"/>
    <property type="evidence" value="ECO:0007669"/>
    <property type="project" value="TreeGrafter"/>
</dbReference>
<dbReference type="GO" id="GO:0000774">
    <property type="term" value="F:adenyl-nucleotide exchange factor activity"/>
    <property type="evidence" value="ECO:0007669"/>
    <property type="project" value="InterPro"/>
</dbReference>
<dbReference type="GO" id="GO:0042803">
    <property type="term" value="F:protein homodimerization activity"/>
    <property type="evidence" value="ECO:0007669"/>
    <property type="project" value="InterPro"/>
</dbReference>
<dbReference type="GO" id="GO:0051087">
    <property type="term" value="F:protein-folding chaperone binding"/>
    <property type="evidence" value="ECO:0007669"/>
    <property type="project" value="InterPro"/>
</dbReference>
<dbReference type="GO" id="GO:0051082">
    <property type="term" value="F:unfolded protein binding"/>
    <property type="evidence" value="ECO:0007669"/>
    <property type="project" value="TreeGrafter"/>
</dbReference>
<dbReference type="GO" id="GO:0006457">
    <property type="term" value="P:protein folding"/>
    <property type="evidence" value="ECO:0007669"/>
    <property type="project" value="InterPro"/>
</dbReference>
<dbReference type="GO" id="GO:0030150">
    <property type="term" value="P:protein import into mitochondrial matrix"/>
    <property type="evidence" value="ECO:0007669"/>
    <property type="project" value="TreeGrafter"/>
</dbReference>
<dbReference type="CDD" id="cd00446">
    <property type="entry name" value="GrpE"/>
    <property type="match status" value="1"/>
</dbReference>
<dbReference type="FunFam" id="2.30.22.10:FF:000002">
    <property type="entry name" value="GrpE protein homolog"/>
    <property type="match status" value="1"/>
</dbReference>
<dbReference type="FunFam" id="3.90.20.20:FF:000011">
    <property type="entry name" value="GrpE protein homolog"/>
    <property type="match status" value="1"/>
</dbReference>
<dbReference type="Gene3D" id="3.90.20.20">
    <property type="match status" value="1"/>
</dbReference>
<dbReference type="Gene3D" id="2.30.22.10">
    <property type="entry name" value="Head domain of nucleotide exchange factor GrpE"/>
    <property type="match status" value="1"/>
</dbReference>
<dbReference type="HAMAP" id="MF_01151">
    <property type="entry name" value="GrpE"/>
    <property type="match status" value="1"/>
</dbReference>
<dbReference type="InterPro" id="IPR000740">
    <property type="entry name" value="GrpE"/>
</dbReference>
<dbReference type="InterPro" id="IPR013805">
    <property type="entry name" value="GrpE_coiled_coil"/>
</dbReference>
<dbReference type="InterPro" id="IPR009012">
    <property type="entry name" value="GrpE_head"/>
</dbReference>
<dbReference type="PANTHER" id="PTHR21237">
    <property type="entry name" value="GRPE PROTEIN"/>
    <property type="match status" value="1"/>
</dbReference>
<dbReference type="PANTHER" id="PTHR21237:SF23">
    <property type="entry name" value="GRPE PROTEIN HOMOLOG, MITOCHONDRIAL"/>
    <property type="match status" value="1"/>
</dbReference>
<dbReference type="Pfam" id="PF01025">
    <property type="entry name" value="GrpE"/>
    <property type="match status" value="1"/>
</dbReference>
<dbReference type="PRINTS" id="PR00773">
    <property type="entry name" value="GRPEPROTEIN"/>
</dbReference>
<dbReference type="SUPFAM" id="SSF58014">
    <property type="entry name" value="Coiled-coil domain of nucleotide exchange factor GrpE"/>
    <property type="match status" value="1"/>
</dbReference>
<dbReference type="SUPFAM" id="SSF51064">
    <property type="entry name" value="Head domain of nucleotide exchange factor GrpE"/>
    <property type="match status" value="1"/>
</dbReference>
<dbReference type="PROSITE" id="PS01071">
    <property type="entry name" value="GRPE"/>
    <property type="match status" value="1"/>
</dbReference>
<feature type="transit peptide" description="Mitochondrion" evidence="2">
    <location>
        <begin position="1"/>
        <end status="unknown"/>
    </location>
</feature>
<feature type="chain" id="PRO_0000013043" description="GrpE protein homolog, mitochondrial">
    <location>
        <begin status="unknown"/>
        <end position="243"/>
    </location>
</feature>
<feature type="region of interest" description="Disordered" evidence="3">
    <location>
        <begin position="56"/>
        <end position="79"/>
    </location>
</feature>